<reference key="1">
    <citation type="journal article" date="1998" name="Science">
        <title>Complete genome sequence of Treponema pallidum, the syphilis spirochete.</title>
        <authorList>
            <person name="Fraser C.M."/>
            <person name="Norris S.J."/>
            <person name="Weinstock G.M."/>
            <person name="White O."/>
            <person name="Sutton G.G."/>
            <person name="Dodson R.J."/>
            <person name="Gwinn M.L."/>
            <person name="Hickey E.K."/>
            <person name="Clayton R.A."/>
            <person name="Ketchum K.A."/>
            <person name="Sodergren E."/>
            <person name="Hardham J.M."/>
            <person name="McLeod M.P."/>
            <person name="Salzberg S.L."/>
            <person name="Peterson J.D."/>
            <person name="Khalak H.G."/>
            <person name="Richardson D.L."/>
            <person name="Howell J.K."/>
            <person name="Chidambaram M."/>
            <person name="Utterback T.R."/>
            <person name="McDonald L.A."/>
            <person name="Artiach P."/>
            <person name="Bowman C."/>
            <person name="Cotton M.D."/>
            <person name="Fujii C."/>
            <person name="Garland S.A."/>
            <person name="Hatch B."/>
            <person name="Horst K."/>
            <person name="Roberts K.M."/>
            <person name="Sandusky M."/>
            <person name="Weidman J.F."/>
            <person name="Smith H.O."/>
            <person name="Venter J.C."/>
        </authorList>
    </citation>
    <scope>NUCLEOTIDE SEQUENCE [LARGE SCALE GENOMIC DNA]</scope>
    <source>
        <strain>Nichols</strain>
    </source>
</reference>
<keyword id="KW-1185">Reference proteome</keyword>
<gene>
    <name type="ordered locus">TP_0432</name>
</gene>
<dbReference type="EMBL" id="AE000520">
    <property type="protein sequence ID" value="AAC65420.1"/>
    <property type="molecule type" value="Genomic_DNA"/>
</dbReference>
<dbReference type="PIR" id="E71326">
    <property type="entry name" value="E71326"/>
</dbReference>
<dbReference type="IntAct" id="O83447">
    <property type="interactions" value="3"/>
</dbReference>
<dbReference type="STRING" id="243276.TP_0432"/>
<dbReference type="EnsemblBacteria" id="AAC65420">
    <property type="protein sequence ID" value="AAC65420"/>
    <property type="gene ID" value="TP_0432"/>
</dbReference>
<dbReference type="KEGG" id="tpa:TP_0432"/>
<dbReference type="KEGG" id="tpw:TPANIC_0432"/>
<dbReference type="HOGENOM" id="CLU_1517273_0_0_12"/>
<dbReference type="Proteomes" id="UP000000811">
    <property type="component" value="Chromosome"/>
</dbReference>
<sequence>MSGGVGVGKRLCCIALVMRAFWYLSAKGVSIAYVPVHRSGGSQDSSMSTAVGDTLLNAFFDEGMVVTAVPPGVHDGQTIAEIAACFEVMPDYALLVQFHSARLPGGESPTSRARGAWSSERFRAVWTLVDLHTQRACVYACVAPYRESIPVSECVDVVTRCIAEQAISYIRVGTSTDTAGVQL</sequence>
<feature type="chain" id="PRO_0000202254" description="Uncharacterized protein TP_0432">
    <location>
        <begin position="1"/>
        <end position="183"/>
    </location>
</feature>
<proteinExistence type="predicted"/>
<protein>
    <recommendedName>
        <fullName>Uncharacterized protein TP_0432</fullName>
    </recommendedName>
</protein>
<organism>
    <name type="scientific">Treponema pallidum (strain Nichols)</name>
    <dbReference type="NCBI Taxonomy" id="243276"/>
    <lineage>
        <taxon>Bacteria</taxon>
        <taxon>Pseudomonadati</taxon>
        <taxon>Spirochaetota</taxon>
        <taxon>Spirochaetia</taxon>
        <taxon>Spirochaetales</taxon>
        <taxon>Treponemataceae</taxon>
        <taxon>Treponema</taxon>
    </lineage>
</organism>
<accession>O83447</accession>
<name>Y432_TREPA</name>